<sequence>MAKLETVTLGNIGKDGKQTLVLNPRGVNPTNGVASLSQAGAVPALEKRVTVSVSQPSRNRKNYKVQVKIQNPTACTANGSCDPSVTRQAYADVTFSFTQYSTDEERAFVRTELAALLASPLLIDAIDQLNPAY</sequence>
<dbReference type="EMBL" id="M99039">
    <property type="protein sequence ID" value="AAA16662.1"/>
    <property type="molecule type" value="Unassigned_DNA"/>
</dbReference>
<dbReference type="EMBL" id="AY099114">
    <property type="protein sequence ID" value="AAM33126.1"/>
    <property type="molecule type" value="Genomic_RNA"/>
</dbReference>
<dbReference type="EMBL" id="GQ153928">
    <property type="protein sequence ID" value="ACY07224.1"/>
    <property type="molecule type" value="Genomic_RNA"/>
</dbReference>
<dbReference type="EMBL" id="GQ153929">
    <property type="protein sequence ID" value="ACY07228.1"/>
    <property type="molecule type" value="Genomic_RNA"/>
</dbReference>
<dbReference type="EMBL" id="GQ153930">
    <property type="protein sequence ID" value="ACY07232.1"/>
    <property type="molecule type" value="Genomic_RNA"/>
</dbReference>
<dbReference type="EMBL" id="GQ153931">
    <property type="protein sequence ID" value="ACY07236.1"/>
    <property type="molecule type" value="Genomic_RNA"/>
</dbReference>
<dbReference type="EMBL" id="JF719735">
    <property type="protein sequence ID" value="AEQ25542.1"/>
    <property type="molecule type" value="Genomic_RNA"/>
</dbReference>
<dbReference type="EMBL" id="JF719736">
    <property type="protein sequence ID" value="AEQ25546.1"/>
    <property type="molecule type" value="Genomic_RNA"/>
</dbReference>
<dbReference type="EMBL" id="JF719737">
    <property type="protein sequence ID" value="AEQ25550.1"/>
    <property type="molecule type" value="Genomic_RNA"/>
</dbReference>
<dbReference type="EMBL" id="AB971354">
    <property type="protein sequence ID" value="BAP18764.1"/>
    <property type="molecule type" value="Genomic_RNA"/>
</dbReference>
<dbReference type="EMBL" id="V00643">
    <property type="protein sequence ID" value="CAA23992.1"/>
    <property type="molecule type" value="mRNA"/>
</dbReference>
<dbReference type="PIR" id="A92240">
    <property type="entry name" value="VCBPQB"/>
</dbReference>
<dbReference type="PDB" id="1QBE">
    <property type="method" value="X-ray"/>
    <property type="resolution" value="3.50 A"/>
    <property type="chains" value="A/B/C=2-133"/>
</dbReference>
<dbReference type="PDB" id="4L8H">
    <property type="method" value="X-ray"/>
    <property type="resolution" value="2.40 A"/>
    <property type="chains" value="A/B=2-133"/>
</dbReference>
<dbReference type="PDB" id="5KIP">
    <property type="method" value="EM"/>
    <property type="resolution" value="3.70 A"/>
    <property type="chains" value="A/B/C=1-133"/>
</dbReference>
<dbReference type="PDB" id="5VLY">
    <property type="method" value="EM"/>
    <property type="resolution" value="3.30 A"/>
    <property type="chains" value="A/B/C=1-133"/>
</dbReference>
<dbReference type="PDB" id="5VLZ">
    <property type="method" value="EM"/>
    <property type="resolution" value="4.40 A"/>
    <property type="chains" value="AA/AB/AC/AD/AE/AF/AG/AH/AI/AJ/AK/AL/AM/AN/BA/BB/BC/BD/BE/BF/BG/BH/BI/BJ/BK/BL/BM/BN/CA/CB=1-133"/>
</dbReference>
<dbReference type="PDB" id="7LGE">
    <property type="method" value="EM"/>
    <property type="resolution" value="5.60 A"/>
    <property type="chains" value="A/B/C/D=1-133"/>
</dbReference>
<dbReference type="PDB" id="7LGF">
    <property type="method" value="EM"/>
    <property type="resolution" value="6.10 A"/>
    <property type="chains" value="A/B/C/D/E/F/G/H/I/J/K/L/M/N/O/P/Q/R/S/T/U=1-133"/>
</dbReference>
<dbReference type="PDB" id="7LGG">
    <property type="method" value="EM"/>
    <property type="resolution" value="6.20 A"/>
    <property type="chains" value="A/B/C/D/E/F/G/H/I/J/K/L/M/N/O=1-133"/>
</dbReference>
<dbReference type="PDB" id="7LGH">
    <property type="method" value="EM"/>
    <property type="resolution" value="8.90 A"/>
    <property type="chains" value="A/B/C/D/E/F/G/H/I/J/K/L/M/N/O/P/Q/R/S/T/U/V=1-133"/>
</dbReference>
<dbReference type="PDB" id="7LHD">
    <property type="method" value="EM"/>
    <property type="resolution" value="4.60 A"/>
    <property type="chains" value="B/BA/BB/BC/BD/BE/BF/BG/BH/BI/BJ/BK/BL/BM/BN/CA/CB/CC/CD/CE/CF/CG/CH/CI/CJ/CK/CL/CM/CN/D=1-133"/>
</dbReference>
<dbReference type="PDBsum" id="1QBE"/>
<dbReference type="PDBsum" id="4L8H"/>
<dbReference type="PDBsum" id="5KIP"/>
<dbReference type="PDBsum" id="5VLY"/>
<dbReference type="PDBsum" id="5VLZ"/>
<dbReference type="PDBsum" id="7LGE"/>
<dbReference type="PDBsum" id="7LGF"/>
<dbReference type="PDBsum" id="7LGG"/>
<dbReference type="PDBsum" id="7LGH"/>
<dbReference type="PDBsum" id="7LHD"/>
<dbReference type="EMDB" id="EMD-23321"/>
<dbReference type="EMDB" id="EMD-23322"/>
<dbReference type="EMDB" id="EMD-23323"/>
<dbReference type="EMDB" id="EMD-23324"/>
<dbReference type="EMDB" id="EMD-23336"/>
<dbReference type="EMDB" id="EMD-8253"/>
<dbReference type="EMDB" id="EMD-8708"/>
<dbReference type="EMDB" id="EMD-8709"/>
<dbReference type="SMR" id="P03615"/>
<dbReference type="EvolutionaryTrace" id="P03615"/>
<dbReference type="Proteomes" id="UP000185268">
    <property type="component" value="Segment"/>
</dbReference>
<dbReference type="Proteomes" id="UP000305125">
    <property type="component" value="Segment"/>
</dbReference>
<dbReference type="Proteomes" id="UP000306921">
    <property type="component" value="Segment"/>
</dbReference>
<dbReference type="Proteomes" id="UP000309733">
    <property type="component" value="Segment"/>
</dbReference>
<dbReference type="GO" id="GO:0039617">
    <property type="term" value="C:T=3 icosahedral viral capsid"/>
    <property type="evidence" value="ECO:0000314"/>
    <property type="project" value="UniProtKB"/>
</dbReference>
<dbReference type="GO" id="GO:0003723">
    <property type="term" value="F:RNA binding"/>
    <property type="evidence" value="ECO:0000314"/>
    <property type="project" value="UniProtKB"/>
</dbReference>
<dbReference type="GO" id="GO:0005198">
    <property type="term" value="F:structural molecule activity"/>
    <property type="evidence" value="ECO:0007669"/>
    <property type="project" value="InterPro"/>
</dbReference>
<dbReference type="GO" id="GO:0030371">
    <property type="term" value="F:translation repressor activity"/>
    <property type="evidence" value="ECO:0000315"/>
    <property type="project" value="UniProtKB"/>
</dbReference>
<dbReference type="FunFam" id="3.30.380.10:FF:000002">
    <property type="entry name" value="Capsid protein"/>
    <property type="match status" value="1"/>
</dbReference>
<dbReference type="Gene3D" id="3.30.380.10">
    <property type="entry name" value="MS2 Viral Coat Protein"/>
    <property type="match status" value="1"/>
</dbReference>
<dbReference type="InterPro" id="IPR002703">
    <property type="entry name" value="Levivir_coat"/>
</dbReference>
<dbReference type="InterPro" id="IPR015954">
    <property type="entry name" value="Phage_RNA-type_capsid"/>
</dbReference>
<dbReference type="Pfam" id="PF01819">
    <property type="entry name" value="Levi_coat"/>
    <property type="match status" value="1"/>
</dbReference>
<dbReference type="SUPFAM" id="SSF55405">
    <property type="entry name" value="RNA bacteriophage capsid protein"/>
    <property type="match status" value="1"/>
</dbReference>
<reference key="1">
    <citation type="journal article" date="1993" name="Gene">
        <title>Recombinant RNA phage Q-beta capsid particles synthesized and self-assembled in Escherichia coli.</title>
        <authorList>
            <person name="Kozlovska T.M."/>
            <person name="Cielens I."/>
            <person name="Dreilinna D."/>
            <person name="Dislers A."/>
            <person name="Baumanis V."/>
            <person name="Ose V."/>
            <person name="Pumpens P."/>
        </authorList>
    </citation>
    <scope>NUCLEOTIDE SEQUENCE [GENOMIC RNA]</scope>
</reference>
<reference key="2">
    <citation type="journal article" date="2003" name="BMC Evol. Biol.">
        <title>Evolution of phage with chemically ambiguous proteomes.</title>
        <authorList>
            <person name="Bacher J.M."/>
            <person name="Bull J.J."/>
            <person name="Ellington A.D."/>
        </authorList>
    </citation>
    <scope>NUCLEOTIDE SEQUENCE [GENOMIC RNA]</scope>
</reference>
<reference key="3">
    <citation type="journal article" date="2009" name="PLoS Genet.">
        <title>The fitness effects of random mutations in single-stranded DNA and RNA bacteriophages.</title>
        <authorList>
            <person name="Domingo-Calap P."/>
            <person name="Cuevas J.M."/>
            <person name="Sanjuan R."/>
        </authorList>
    </citation>
    <scope>NUCLEOTIDE SEQUENCE [GENOMIC RNA]</scope>
    <source>
        <strain>QB_1</strain>
        <strain evidence="12">QB_2</strain>
        <strain evidence="13">QB_3</strain>
        <strain evidence="14">QB_ancestral</strain>
    </source>
</reference>
<reference key="4">
    <citation type="journal article" date="2011" name="Evolution">
        <title>Experimental evolution of RNA versus DNA viruses.</title>
        <authorList>
            <person name="Domingo-Calap P."/>
            <person name="Sanjuan R."/>
        </authorList>
    </citation>
    <scope>NUCLEOTIDE SEQUENCE [GENOMIC RNA]</scope>
    <source>
        <strain evidence="15">Qbeta_1_FR</strain>
        <strain evidence="16">Qbeta_2_FR</strain>
        <strain evidence="17">Qbeta_3_FR</strain>
    </source>
</reference>
<reference key="5">
    <citation type="journal article" date="2014" name="J. Virol.">
        <title>Contribution of silent mutations to thermal adaptation of RNA bacteriophage Qbeta.</title>
        <authorList>
            <person name="Kashiwagi A."/>
            <person name="Sugawara R."/>
            <person name="Sano-Tsushima F."/>
            <person name="Kumagai T."/>
            <person name="Yomo T."/>
        </authorList>
    </citation>
    <scope>NUCLEOTIDE SEQUENCE [GENOMIC RNA]</scope>
    <source>
        <strain evidence="18">QB_ancestral</strain>
        <strain>TW18</strain>
    </source>
</reference>
<reference key="6">
    <citation type="journal article" date="1978" name="J. Biol. Chem.">
        <title>Determination of the first half of the coat protein cistron of bacteriophage Q-beta as an application of a mapping procedure for RNA fragments.</title>
        <authorList>
            <person name="Escarmis C."/>
            <person name="Sastry P.A."/>
            <person name="Billeter M.A."/>
        </authorList>
    </citation>
    <scope>NUCLEOTIDE SEQUENCE [GENOMIC RNA] OF 1-81</scope>
</reference>
<reference key="7">
    <citation type="journal article" date="1977" name="J. Biol. Chem.">
        <title>Revised amino acid sequence of Qbeta coat protein between positions 1 and 60.</title>
        <authorList>
            <person name="Stoll E."/>
            <person name="Wilson K.J."/>
            <person name="Reiser J."/>
            <person name="Weissmann C."/>
        </authorList>
    </citation>
    <scope>SEQUENCE REVISION TO 1-61</scope>
</reference>
<reference key="8">
    <citation type="journal article" date="1971" name="J. Biol. Chem.">
        <title>The amino acid sequence of the Q-beta coat protein.</title>
        <authorList>
            <person name="Maita T."/>
            <person name="Konigsberg W."/>
        </authorList>
    </citation>
    <scope>PROTEIN SEQUENCE OF 2-133</scope>
</reference>
<reference key="9">
    <citation type="journal article" date="1996" name="J. Biol. Chem.">
        <title>The RNA-binding site of bacteriophage Qbeta coat protein.</title>
        <authorList>
            <person name="Lim F."/>
            <person name="Spingola M."/>
            <person name="Peabody D.S."/>
        </authorList>
    </citation>
    <scope>RNA-BINDING</scope>
    <scope>FUNCTION</scope>
    <scope>MUTAGENESIS OF VAL-33; THR-50; SER-57; ARG-60; ASN-62; LYS-64; TYR-90 AND SER-96</scope>
    <scope>SUBUNIT</scope>
</reference>
<reference key="10">
    <citation type="journal article" date="2006" name="Structure">
        <title>Structural basis of RNA binding discrimination between bacteriophages Qbeta and MS2.</title>
        <authorList>
            <person name="Horn W.T."/>
            <person name="Tars K."/>
            <person name="Grahn E."/>
            <person name="Helgstrand C."/>
            <person name="Baron A.J."/>
            <person name="Lago H."/>
            <person name="Adams C.J."/>
            <person name="Peabody D.S."/>
            <person name="Phillips S.E."/>
            <person name="Stonehouse N.J."/>
            <person name="Liljas L."/>
            <person name="Stockley P.G."/>
        </authorList>
    </citation>
    <scope>RNA-BINDING</scope>
    <scope>SUBUNIT</scope>
</reference>
<reference key="11">
    <citation type="journal article" date="2010" name="J. Mol. Biol.">
        <title>Viral genomic single-stranded RNA directs the pathway toward a T=3 capsid.</title>
        <authorList>
            <person name="Basnak G."/>
            <person name="Morton V.L."/>
            <person name="Rolfsson O."/>
            <person name="Stonehouse N.J."/>
            <person name="Ashcroft A.E."/>
            <person name="Stockley P.G."/>
        </authorList>
    </citation>
    <scope>FUNCTION</scope>
</reference>
<reference key="12">
    <citation type="journal article" date="2017" name="J. Mol. Biol.">
        <title>Crystal structure of the maturation protein from bacteriophage Qbeta.</title>
        <authorList>
            <person name="Rumnieks J."/>
            <person name="Tars K."/>
        </authorList>
    </citation>
    <scope>INTERACTION WITH MATURATION PROTEIN A2</scope>
</reference>
<reference key="13">
    <citation type="journal article" date="1996" name="Structure">
        <title>The crystal structure of bacteriophage Q-beta at 3.5-A resolution.</title>
        <authorList>
            <person name="Golmohammadi R."/>
            <person name="Fridborg K."/>
            <person name="Bundule M."/>
            <person name="Valegard K."/>
            <person name="Liljas L."/>
        </authorList>
    </citation>
    <scope>X-RAY CRYSTALLOGRAPHY (3.5 ANGSTROMS)</scope>
</reference>
<reference key="14">
    <citation type="journal article" date="2014" name="J. Mol. Biol.">
        <title>Crystal structure of the bacteriophage Qbeta coat protein in complex with the RNA operator of the replicase gene.</title>
        <authorList>
            <person name="Rumnieks J."/>
            <person name="Tars K."/>
        </authorList>
    </citation>
    <scope>X-RAY CRYSTALLOGRAPHY (2.40 ANGSTROMS) OF 2-133</scope>
    <scope>RNA-BINDING</scope>
</reference>
<reference key="15">
    <citation type="journal article" date="2016" name="Proc. Natl. Acad. Sci. U.S.A.">
        <title>Asymmetric cryo-EM structure of the canonical Allolevivirus Qbeta reveals a single maturation protein and the genomic ssRNA in situ.</title>
        <authorList>
            <person name="Gorzelnik K.V."/>
            <person name="Cui Z."/>
            <person name="Reed C.A."/>
            <person name="Jakana J."/>
            <person name="Young R."/>
            <person name="Zhang J."/>
        </authorList>
    </citation>
    <scope>STRUCTURE BY ELECTRON MICROSCOPY (3.70 ANGSTROMS) OF THE VIRION</scope>
    <scope>FUNCTION</scope>
    <scope>SUBCELLULAR LOCATION</scope>
</reference>
<reference key="16">
    <citation type="journal article" date="2017" name="Proc. Natl. Acad. Sci. U.S.A.">
        <title>Structures of Qbeta virions, virus-like particles, and the Qbeta-MurA complex reveal internal coat proteins and the mechanism of host lysis.</title>
        <authorList>
            <person name="Cui Z."/>
            <person name="Gorzelnik K.V."/>
            <person name="Chang J.Y."/>
            <person name="Langlais C."/>
            <person name="Jakana J."/>
            <person name="Young R."/>
            <person name="Zhang J."/>
        </authorList>
    </citation>
    <scope>STRUCTURE BY ELECTRON MICROSCOPY (3.30 ANGSTROMS)</scope>
    <scope>INTERACTION WITH MATURATION PROTEIN A2</scope>
    <scope>SUBCELLULAR LOCATION</scope>
</reference>
<organism>
    <name type="scientific">Escherichia virus Qbeta</name>
    <name type="common">Bacteriophage Q-beta</name>
    <dbReference type="NCBI Taxonomy" id="39803"/>
    <lineage>
        <taxon>Viruses</taxon>
        <taxon>Riboviria</taxon>
        <taxon>Orthornavirae</taxon>
        <taxon>Lenarviricota</taxon>
        <taxon>Leviviricetes</taxon>
        <taxon>Norzivirales</taxon>
        <taxon>Fiersviridae</taxon>
        <taxon>Qubevirus</taxon>
    </lineage>
</organism>
<protein>
    <recommendedName>
        <fullName>Capsid protein</fullName>
        <shortName>CP</shortName>
    </recommendedName>
    <alternativeName>
        <fullName>Coat protein</fullName>
    </alternativeName>
</protein>
<accession>P03615</accession>
<accession>D0U1F3</accession>
<accession>G4WZR7</accession>
<accession>Q774G0</accession>
<name>CAPSD_BPQBE</name>
<keyword id="KW-0002">3D-structure</keyword>
<keyword id="KW-0167">Capsid protein</keyword>
<keyword id="KW-0903">Direct protein sequencing</keyword>
<keyword id="KW-0694">RNA-binding</keyword>
<keyword id="KW-1142">T=3 icosahedral capsid protein</keyword>
<keyword id="KW-0810">Translation regulation</keyword>
<keyword id="KW-0946">Virion</keyword>
<comment type="function">
    <text evidence="2 6 10">Capsid protein self-assembles to form an icosahedral capsid with a T=3 symmetry, about 26 nm in diameter, and consisting of 89 capsid proteins dimers (178 capsid proteins) (PubMed:19913556, PubMed:27671640). Involved in viral genome encapsidation through the interaction between a capsid protein dimer and the multiple packaging signals present in the RNA genome (PubMed:27671640, PubMed:8943226). Binding of the capsid proteins to the viral RNA induces a conformational change required for efficient T=3 shell formation (PubMed:19913556). The capsid also contains 1 copy of the A2 maturation protein (PubMed:27671640).</text>
</comment>
<comment type="function">
    <text evidence="10">Acts as a translational repressor of viral replicase synthesis late in infection. This latter function is the result of capsid protein interaction with an RNA hairpin which contains the replicase ribosome-binding site.</text>
</comment>
<comment type="subunit">
    <text evidence="1 7 8 10">Homodimer (PubMed:16531233). The homodimers binds to the viral RNA via an operator hairpin, but also to many other RNA sequences in the viral genome; this interaction probably shifts the virus from the replicative to the assembly phase and ensures specific encapsidation of the viral genome (PubMed:16531233, PubMed:8943226). Interacts with the maturation protein A2 (PubMed:28111107, PubMed:29078304).</text>
</comment>
<comment type="subcellular location">
    <subcellularLocation>
        <location evidence="6 8">Virion</location>
    </subcellularLocation>
    <text evidence="6 8">The shell is composed of 89 dimers of the capsid protein, one of them being sequestered inside the virion, and 1 copy of the maturation protein.</text>
</comment>
<comment type="similarity">
    <text evidence="11">Belongs to the Leviviricetes capsid protein family.</text>
</comment>
<comment type="online information" name="Virus Particle ExploreR db">
    <link uri="https://viperdb.org/Info_Page.php?VDB=1qbe"/>
    <text>Icosahedral capsid structure</text>
</comment>
<organismHost>
    <name type="scientific">Escherichia coli</name>
    <dbReference type="NCBI Taxonomy" id="562"/>
</organismHost>
<proteinExistence type="evidence at protein level"/>
<feature type="initiator methionine" description="Removed; by host" evidence="9">
    <location>
        <position position="1"/>
    </location>
</feature>
<feature type="chain" id="PRO_0000164846" description="Capsid protein">
    <location>
        <begin position="2"/>
        <end position="133"/>
    </location>
</feature>
<feature type="site" description="RNA-binding" evidence="5">
    <location>
        <position position="90"/>
    </location>
</feature>
<feature type="sequence variant" description="In strain: Qbeta_3_FR." evidence="4">
    <original>A</original>
    <variation>S</variation>
    <location>
        <position position="34"/>
    </location>
</feature>
<feature type="sequence variant" description="In strain: QB_1 and Qbeta_1_FR." evidence="3 4">
    <original>T</original>
    <variation>A</variation>
    <location>
        <position position="76"/>
    </location>
</feature>
<feature type="mutagenesis site" description="Decreased RNA-binding to the viral operator and loss of repressor activity." evidence="10">
    <original>V</original>
    <variation>A</variation>
    <location>
        <position position="33"/>
    </location>
</feature>
<feature type="mutagenesis site" description="Decreased RNA-binding to the viral operator and loss of repressor activity." evidence="10">
    <original>T</original>
    <variation>A</variation>
    <location>
        <position position="50"/>
    </location>
</feature>
<feature type="mutagenesis site" description="Decreased RNA-binding to the viral operator and loss of repressor activity." evidence="10">
    <original>S</original>
    <variation>P</variation>
    <location>
        <position position="57"/>
    </location>
</feature>
<feature type="mutagenesis site" description="Decreased RNA-binding to the viral operator and loss of repressor activity." evidence="10">
    <original>R</original>
    <variation>C</variation>
    <location>
        <position position="60"/>
    </location>
</feature>
<feature type="mutagenesis site" description="Decreased RNA-binding to the viral operator and loss of repressor activity." evidence="10">
    <original>N</original>
    <variation>D</variation>
    <location>
        <position position="62"/>
    </location>
</feature>
<feature type="mutagenesis site" description="Decreased RNA-binding to the viral operator and loss of repressor activity." evidence="10">
    <original>K</original>
    <variation>E</variation>
    <location>
        <position position="64"/>
    </location>
</feature>
<feature type="mutagenesis site" description="Decreased RNA-binding to the viral operator and loss of repressor activity." evidence="10">
    <original>Y</original>
    <variation>H</variation>
    <location>
        <position position="90"/>
    </location>
</feature>
<feature type="mutagenesis site" description="Decreased RNA-binding to the viral operator and loss of repressor activity." evidence="10">
    <original>S</original>
    <variation>L</variation>
    <location>
        <position position="96"/>
    </location>
</feature>
<feature type="sequence conflict" description="In Ref. 8; AA sequence." evidence="11" ref="8">
    <original>N</original>
    <variation>D</variation>
    <location>
        <position position="23"/>
    </location>
</feature>
<feature type="sequence conflict" description="In Ref. 8; AA sequence." evidence="11" ref="8">
    <location>
        <position position="57"/>
    </location>
</feature>
<feature type="strand" evidence="20">
    <location>
        <begin position="7"/>
        <end position="12"/>
    </location>
</feature>
<feature type="turn" evidence="20">
    <location>
        <begin position="13"/>
        <end position="16"/>
    </location>
</feature>
<feature type="strand" evidence="20">
    <location>
        <begin position="18"/>
        <end position="27"/>
    </location>
</feature>
<feature type="turn" evidence="20">
    <location>
        <begin position="29"/>
        <end position="31"/>
    </location>
</feature>
<feature type="strand" evidence="20">
    <location>
        <begin position="34"/>
        <end position="37"/>
    </location>
</feature>
<feature type="helix" evidence="19">
    <location>
        <begin position="43"/>
        <end position="45"/>
    </location>
</feature>
<feature type="strand" evidence="20">
    <location>
        <begin position="48"/>
        <end position="54"/>
    </location>
</feature>
<feature type="strand" evidence="20">
    <location>
        <begin position="62"/>
        <end position="73"/>
    </location>
</feature>
<feature type="strand" evidence="19">
    <location>
        <begin position="78"/>
        <end position="80"/>
    </location>
</feature>
<feature type="strand" evidence="20">
    <location>
        <begin position="87"/>
        <end position="97"/>
    </location>
</feature>
<feature type="helix" evidence="20">
    <location>
        <begin position="103"/>
        <end position="116"/>
    </location>
</feature>
<feature type="helix" evidence="20">
    <location>
        <begin position="120"/>
        <end position="126"/>
    </location>
</feature>
<evidence type="ECO:0000269" key="1">
    <source>
    </source>
</evidence>
<evidence type="ECO:0000269" key="2">
    <source>
    </source>
</evidence>
<evidence type="ECO:0000269" key="3">
    <source>
    </source>
</evidence>
<evidence type="ECO:0000269" key="4">
    <source>
    </source>
</evidence>
<evidence type="ECO:0000269" key="5">
    <source>
    </source>
</evidence>
<evidence type="ECO:0000269" key="6">
    <source>
    </source>
</evidence>
<evidence type="ECO:0000269" key="7">
    <source>
    </source>
</evidence>
<evidence type="ECO:0000269" key="8">
    <source>
    </source>
</evidence>
<evidence type="ECO:0000269" key="9">
    <source>
    </source>
</evidence>
<evidence type="ECO:0000269" key="10">
    <source>
    </source>
</evidence>
<evidence type="ECO:0000305" key="11"/>
<evidence type="ECO:0000312" key="12">
    <source>
        <dbReference type="EMBL" id="ACY07228.1"/>
    </source>
</evidence>
<evidence type="ECO:0000312" key="13">
    <source>
        <dbReference type="EMBL" id="ACY07232.1"/>
    </source>
</evidence>
<evidence type="ECO:0000312" key="14">
    <source>
        <dbReference type="EMBL" id="ACY07236.1"/>
    </source>
</evidence>
<evidence type="ECO:0000312" key="15">
    <source>
        <dbReference type="EMBL" id="AEQ25542.1"/>
    </source>
</evidence>
<evidence type="ECO:0000312" key="16">
    <source>
        <dbReference type="EMBL" id="AEQ25546.1"/>
    </source>
</evidence>
<evidence type="ECO:0000312" key="17">
    <source>
        <dbReference type="EMBL" id="AEQ25550.1"/>
    </source>
</evidence>
<evidence type="ECO:0000312" key="18">
    <source>
        <dbReference type="EMBL" id="BAP18764.1"/>
    </source>
</evidence>
<evidence type="ECO:0007829" key="19">
    <source>
        <dbReference type="PDB" id="1QBE"/>
    </source>
</evidence>
<evidence type="ECO:0007829" key="20">
    <source>
        <dbReference type="PDB" id="4L8H"/>
    </source>
</evidence>